<proteinExistence type="inferred from homology"/>
<feature type="chain" id="PRO_1000013747" description="tRNA uridine(34) hydroxylase">
    <location>
        <begin position="1"/>
        <end position="367"/>
    </location>
</feature>
<feature type="domain" description="Rhodanese" evidence="1">
    <location>
        <begin position="159"/>
        <end position="249"/>
    </location>
</feature>
<feature type="active site" description="Cysteine persulfide intermediate" evidence="1">
    <location>
        <position position="213"/>
    </location>
</feature>
<dbReference type="EC" id="1.14.-.-" evidence="1"/>
<dbReference type="EMBL" id="CP000350">
    <property type="protein sequence ID" value="ABJ76890.1"/>
    <property type="molecule type" value="Genomic_DNA"/>
</dbReference>
<dbReference type="RefSeq" id="WP_011669576.1">
    <property type="nucleotide sequence ID" value="NC_008510.1"/>
</dbReference>
<dbReference type="SMR" id="Q04QD0"/>
<dbReference type="KEGG" id="lbj:LBJ_2438"/>
<dbReference type="HOGENOM" id="CLU_038878_1_1_12"/>
<dbReference type="Proteomes" id="UP000000656">
    <property type="component" value="Chromosome 1"/>
</dbReference>
<dbReference type="GO" id="GO:0016705">
    <property type="term" value="F:oxidoreductase activity, acting on paired donors, with incorporation or reduction of molecular oxygen"/>
    <property type="evidence" value="ECO:0007669"/>
    <property type="project" value="UniProtKB-UniRule"/>
</dbReference>
<dbReference type="GO" id="GO:0006400">
    <property type="term" value="P:tRNA modification"/>
    <property type="evidence" value="ECO:0007669"/>
    <property type="project" value="UniProtKB-UniRule"/>
</dbReference>
<dbReference type="CDD" id="cd01518">
    <property type="entry name" value="RHOD_YceA"/>
    <property type="match status" value="1"/>
</dbReference>
<dbReference type="Gene3D" id="3.30.70.100">
    <property type="match status" value="1"/>
</dbReference>
<dbReference type="Gene3D" id="3.40.250.10">
    <property type="entry name" value="Rhodanese-like domain"/>
    <property type="match status" value="1"/>
</dbReference>
<dbReference type="HAMAP" id="MF_00469">
    <property type="entry name" value="TrhO"/>
    <property type="match status" value="1"/>
</dbReference>
<dbReference type="InterPro" id="IPR001763">
    <property type="entry name" value="Rhodanese-like_dom"/>
</dbReference>
<dbReference type="InterPro" id="IPR036873">
    <property type="entry name" value="Rhodanese-like_dom_sf"/>
</dbReference>
<dbReference type="InterPro" id="IPR022111">
    <property type="entry name" value="Rhodanese_C"/>
</dbReference>
<dbReference type="InterPro" id="IPR020936">
    <property type="entry name" value="TrhO"/>
</dbReference>
<dbReference type="InterPro" id="IPR040503">
    <property type="entry name" value="TRHO_N"/>
</dbReference>
<dbReference type="NCBIfam" id="NF001133">
    <property type="entry name" value="PRK00142.1-1"/>
    <property type="match status" value="1"/>
</dbReference>
<dbReference type="NCBIfam" id="NF001135">
    <property type="entry name" value="PRK00142.1-3"/>
    <property type="match status" value="1"/>
</dbReference>
<dbReference type="PANTHER" id="PTHR43846:SF1">
    <property type="entry name" value="TRNA URIDINE(34) HYDROXYLASE"/>
    <property type="match status" value="1"/>
</dbReference>
<dbReference type="PANTHER" id="PTHR43846">
    <property type="entry name" value="UPF0176 PROTEIN YCEA"/>
    <property type="match status" value="1"/>
</dbReference>
<dbReference type="Pfam" id="PF00581">
    <property type="entry name" value="Rhodanese"/>
    <property type="match status" value="1"/>
</dbReference>
<dbReference type="Pfam" id="PF12368">
    <property type="entry name" value="Rhodanese_C"/>
    <property type="match status" value="1"/>
</dbReference>
<dbReference type="Pfam" id="PF17773">
    <property type="entry name" value="UPF0176_N"/>
    <property type="match status" value="1"/>
</dbReference>
<dbReference type="SMART" id="SM00450">
    <property type="entry name" value="RHOD"/>
    <property type="match status" value="1"/>
</dbReference>
<dbReference type="SUPFAM" id="SSF52821">
    <property type="entry name" value="Rhodanese/Cell cycle control phosphatase"/>
    <property type="match status" value="1"/>
</dbReference>
<dbReference type="PROSITE" id="PS50206">
    <property type="entry name" value="RHODANESE_3"/>
    <property type="match status" value="1"/>
</dbReference>
<reference key="1">
    <citation type="journal article" date="2006" name="Proc. Natl. Acad. Sci. U.S.A.">
        <title>Genome reduction in Leptospira borgpetersenii reflects limited transmission potential.</title>
        <authorList>
            <person name="Bulach D.M."/>
            <person name="Zuerner R.L."/>
            <person name="Wilson P."/>
            <person name="Seemann T."/>
            <person name="McGrath A."/>
            <person name="Cullen P.A."/>
            <person name="Davis J."/>
            <person name="Johnson M."/>
            <person name="Kuczek E."/>
            <person name="Alt D.P."/>
            <person name="Peterson-Burch B."/>
            <person name="Coppel R.L."/>
            <person name="Rood J.I."/>
            <person name="Davies J.K."/>
            <person name="Adler B."/>
        </authorList>
    </citation>
    <scope>NUCLEOTIDE SEQUENCE [LARGE SCALE GENOMIC DNA]</scope>
    <source>
        <strain>JB197</strain>
    </source>
</reference>
<organism>
    <name type="scientific">Leptospira borgpetersenii serovar Hardjo-bovis (strain JB197)</name>
    <dbReference type="NCBI Taxonomy" id="355277"/>
    <lineage>
        <taxon>Bacteria</taxon>
        <taxon>Pseudomonadati</taxon>
        <taxon>Spirochaetota</taxon>
        <taxon>Spirochaetia</taxon>
        <taxon>Leptospirales</taxon>
        <taxon>Leptospiraceae</taxon>
        <taxon>Leptospira</taxon>
    </lineage>
</organism>
<sequence length="367" mass="42523">MANRGDLQKKTHTKKRPLHNIYGKEILSKRLEAENFPRTTLSFYRYVILENVQELRNRLYVEWEALGVLGRIYVAREGINAQLSIPSHNLNSFKENLNSRIQFKDMLLKIAVEDDHRSFLKLDLKVRNKIVADGLNDDAFDVTNVGKHLSAEEFNRCMEDKNSIVVDVRNHYESEIGHFENAILPQSDTFREELQILLELLNGKEDHKILMYCTGGIRCEKASAWLKHHGFKDVNQLHGGIISYAHEISQKGLESKFRGKNFVFDGRLQETIGNEIISVCHQCGKKSDRHINCSNPGCHILFIQCDDCSEKFEGCCTEECKTVLHLPKEKQKEIRKGKSNENRFFTKSKIRPKISELYRNRKPFETA</sequence>
<protein>
    <recommendedName>
        <fullName evidence="1">tRNA uridine(34) hydroxylase</fullName>
        <ecNumber evidence="1">1.14.-.-</ecNumber>
    </recommendedName>
    <alternativeName>
        <fullName evidence="1">tRNA hydroxylation protein O</fullName>
    </alternativeName>
</protein>
<keyword id="KW-0560">Oxidoreductase</keyword>
<keyword id="KW-0819">tRNA processing</keyword>
<accession>Q04QD0</accession>
<comment type="function">
    <text evidence="1">Catalyzes oxygen-dependent 5-hydroxyuridine (ho5U) modification at position 34 in tRNAs.</text>
</comment>
<comment type="catalytic activity">
    <reaction evidence="1">
        <text>uridine(34) in tRNA + AH2 + O2 = 5-hydroxyuridine(34) in tRNA + A + H2O</text>
        <dbReference type="Rhea" id="RHEA:64224"/>
        <dbReference type="Rhea" id="RHEA-COMP:11727"/>
        <dbReference type="Rhea" id="RHEA-COMP:13381"/>
        <dbReference type="ChEBI" id="CHEBI:13193"/>
        <dbReference type="ChEBI" id="CHEBI:15377"/>
        <dbReference type="ChEBI" id="CHEBI:15379"/>
        <dbReference type="ChEBI" id="CHEBI:17499"/>
        <dbReference type="ChEBI" id="CHEBI:65315"/>
        <dbReference type="ChEBI" id="CHEBI:136877"/>
    </reaction>
</comment>
<comment type="similarity">
    <text evidence="1">Belongs to the TrhO family.</text>
</comment>
<evidence type="ECO:0000255" key="1">
    <source>
        <dbReference type="HAMAP-Rule" id="MF_00469"/>
    </source>
</evidence>
<gene>
    <name evidence="1" type="primary">trhO</name>
    <name type="ordered locus">LBJ_2438</name>
</gene>
<name>TRHO_LEPBJ</name>